<accession>P16400</accession>
<name>MLER_LACLA</name>
<comment type="function">
    <text>Required for malolactic fermentation. It is most probably a transcriptional activator.</text>
</comment>
<comment type="subcellular location">
    <subcellularLocation>
        <location>Cytoplasm</location>
    </subcellularLocation>
</comment>
<comment type="similarity">
    <text evidence="2">Belongs to the LysR transcriptional regulatory family.</text>
</comment>
<proteinExistence type="inferred from homology"/>
<sequence>MSLNLRDLEYFYQLSKLRSFTNVAKHFRVSQPTISYAIKRLETYYDCDLFYKDSSHQVVDLTPEGELLAMRTNEILSELNHTKKAIHRSSMKDFKVGFPPIISSYLLSKQDNLNFFNALHMIYGGSNELLSLLLNEEIDSSLLGSLEKIKHPQLEIEELFQKEFFIIMSDSHPLANEKELGFKDLLNEDFILLGEHNIHFNAFNRLNEKYNQSANVVLKLDDAHTIKELVRKNLGISLMADIRLSEDFKNLVKVPFIEEDKQFFHINYAYQKNSILSESEKNFLEILKTLK</sequence>
<protein>
    <recommendedName>
        <fullName>Malolactic fermentation system transcriptional activator</fullName>
    </recommendedName>
</protein>
<gene>
    <name type="primary">mleR</name>
    <name type="ordered locus">LL0872</name>
    <name type="ORF">L0148</name>
</gene>
<reference key="1">
    <citation type="journal article" date="1989" name="J. Bacteriol.">
        <title>Product of the Lactococcus lactis gene required for malolactic fermentation is homologous to a family of positive regulators.</title>
        <authorList>
            <person name="Renault P."/>
            <person name="Gaillardin C."/>
            <person name="Heslot H."/>
        </authorList>
    </citation>
    <scope>NUCLEOTIDE SEQUENCE [GENOMIC DNA]</scope>
</reference>
<reference key="2">
    <citation type="journal article" date="2001" name="Genome Res.">
        <title>The complete genome sequence of the lactic acid bacterium Lactococcus lactis ssp. lactis IL1403.</title>
        <authorList>
            <person name="Bolotin A."/>
            <person name="Wincker P."/>
            <person name="Mauger S."/>
            <person name="Jaillon O."/>
            <person name="Malarme K."/>
            <person name="Weissenbach J."/>
            <person name="Ehrlich S.D."/>
            <person name="Sorokin A."/>
        </authorList>
    </citation>
    <scope>NUCLEOTIDE SEQUENCE [LARGE SCALE GENOMIC DNA]</scope>
    <source>
        <strain>IL1403</strain>
    </source>
</reference>
<feature type="chain" id="PRO_0000105682" description="Malolactic fermentation system transcriptional activator">
    <location>
        <begin position="1"/>
        <end position="291"/>
    </location>
</feature>
<feature type="domain" description="HTH lysR-type" evidence="1">
    <location>
        <begin position="1"/>
        <end position="60"/>
    </location>
</feature>
<feature type="DNA-binding region" description="H-T-H motif" evidence="1">
    <location>
        <begin position="20"/>
        <end position="39"/>
    </location>
</feature>
<evidence type="ECO:0000255" key="1">
    <source>
        <dbReference type="PROSITE-ProRule" id="PRU00253"/>
    </source>
</evidence>
<evidence type="ECO:0000305" key="2"/>
<dbReference type="EMBL" id="M90762">
    <property type="status" value="NOT_ANNOTATED_CDS"/>
    <property type="molecule type" value="Genomic_DNA"/>
</dbReference>
<dbReference type="EMBL" id="AE005176">
    <property type="protein sequence ID" value="AAK04970.1"/>
    <property type="molecule type" value="Genomic_DNA"/>
</dbReference>
<dbReference type="PIR" id="A44510">
    <property type="entry name" value="A44510"/>
</dbReference>
<dbReference type="PIR" id="H86733">
    <property type="entry name" value="H86733"/>
</dbReference>
<dbReference type="RefSeq" id="NP_267028.1">
    <property type="nucleotide sequence ID" value="NC_002662.1"/>
</dbReference>
<dbReference type="RefSeq" id="WP_010905602.1">
    <property type="nucleotide sequence ID" value="NC_002662.1"/>
</dbReference>
<dbReference type="SMR" id="P16400"/>
<dbReference type="PaxDb" id="272623-L0148"/>
<dbReference type="DNASU" id="1114502"/>
<dbReference type="EnsemblBacteria" id="AAK04970">
    <property type="protein sequence ID" value="AAK04970"/>
    <property type="gene ID" value="L0148"/>
</dbReference>
<dbReference type="KEGG" id="lla:L0148"/>
<dbReference type="PATRIC" id="fig|272623.7.peg.933"/>
<dbReference type="eggNOG" id="COG0583">
    <property type="taxonomic scope" value="Bacteria"/>
</dbReference>
<dbReference type="HOGENOM" id="CLU_039613_6_2_9"/>
<dbReference type="OrthoDB" id="9803735at2"/>
<dbReference type="Proteomes" id="UP000002196">
    <property type="component" value="Chromosome"/>
</dbReference>
<dbReference type="GO" id="GO:0005829">
    <property type="term" value="C:cytosol"/>
    <property type="evidence" value="ECO:0007669"/>
    <property type="project" value="TreeGrafter"/>
</dbReference>
<dbReference type="GO" id="GO:0003677">
    <property type="term" value="F:DNA binding"/>
    <property type="evidence" value="ECO:0007669"/>
    <property type="project" value="UniProtKB-KW"/>
</dbReference>
<dbReference type="GO" id="GO:0003700">
    <property type="term" value="F:DNA-binding transcription factor activity"/>
    <property type="evidence" value="ECO:0007669"/>
    <property type="project" value="InterPro"/>
</dbReference>
<dbReference type="Gene3D" id="3.40.190.290">
    <property type="match status" value="1"/>
</dbReference>
<dbReference type="Gene3D" id="1.10.10.10">
    <property type="entry name" value="Winged helix-like DNA-binding domain superfamily/Winged helix DNA-binding domain"/>
    <property type="match status" value="1"/>
</dbReference>
<dbReference type="InterPro" id="IPR050950">
    <property type="entry name" value="HTH-type_LysR_regulators"/>
</dbReference>
<dbReference type="InterPro" id="IPR005119">
    <property type="entry name" value="LysR_subst-bd"/>
</dbReference>
<dbReference type="InterPro" id="IPR000847">
    <property type="entry name" value="Tscrpt_reg_HTH_LysR"/>
</dbReference>
<dbReference type="InterPro" id="IPR036388">
    <property type="entry name" value="WH-like_DNA-bd_sf"/>
</dbReference>
<dbReference type="InterPro" id="IPR036390">
    <property type="entry name" value="WH_DNA-bd_sf"/>
</dbReference>
<dbReference type="PANTHER" id="PTHR30419:SF28">
    <property type="entry name" value="HTH-TYPE TRANSCRIPTIONAL REGULATOR BSDA"/>
    <property type="match status" value="1"/>
</dbReference>
<dbReference type="PANTHER" id="PTHR30419">
    <property type="entry name" value="HTH-TYPE TRANSCRIPTIONAL REGULATOR YBHD"/>
    <property type="match status" value="1"/>
</dbReference>
<dbReference type="Pfam" id="PF00126">
    <property type="entry name" value="HTH_1"/>
    <property type="match status" value="1"/>
</dbReference>
<dbReference type="Pfam" id="PF03466">
    <property type="entry name" value="LysR_substrate"/>
    <property type="match status" value="1"/>
</dbReference>
<dbReference type="SUPFAM" id="SSF53850">
    <property type="entry name" value="Periplasmic binding protein-like II"/>
    <property type="match status" value="1"/>
</dbReference>
<dbReference type="SUPFAM" id="SSF46785">
    <property type="entry name" value="Winged helix' DNA-binding domain"/>
    <property type="match status" value="1"/>
</dbReference>
<dbReference type="PROSITE" id="PS50931">
    <property type="entry name" value="HTH_LYSR"/>
    <property type="match status" value="1"/>
</dbReference>
<organism>
    <name type="scientific">Lactococcus lactis subsp. lactis (strain IL1403)</name>
    <name type="common">Streptococcus lactis</name>
    <dbReference type="NCBI Taxonomy" id="272623"/>
    <lineage>
        <taxon>Bacteria</taxon>
        <taxon>Bacillati</taxon>
        <taxon>Bacillota</taxon>
        <taxon>Bacilli</taxon>
        <taxon>Lactobacillales</taxon>
        <taxon>Streptococcaceae</taxon>
        <taxon>Lactococcus</taxon>
    </lineage>
</organism>
<keyword id="KW-0010">Activator</keyword>
<keyword id="KW-0963">Cytoplasm</keyword>
<keyword id="KW-0238">DNA-binding</keyword>
<keyword id="KW-1185">Reference proteome</keyword>
<keyword id="KW-0804">Transcription</keyword>
<keyword id="KW-0805">Transcription regulation</keyword>